<sequence>MLQPKRTKFRKQQKLRNRGLAHRGNKVSFGEFGLQATSRGRITARQIEAGRRAISRHIKRGGKIWIRIFPDKPITQKPLEVRMGKGKGSVEYWVAQIQPGRVLYEITGVKEELAREAFARAAAKMPVQTTFVEKQVM</sequence>
<proteinExistence type="inferred from homology"/>
<evidence type="ECO:0000255" key="1">
    <source>
        <dbReference type="HAMAP-Rule" id="MF_01342"/>
    </source>
</evidence>
<evidence type="ECO:0000305" key="2"/>
<keyword id="KW-0687">Ribonucleoprotein</keyword>
<keyword id="KW-0689">Ribosomal protein</keyword>
<keyword id="KW-0694">RNA-binding</keyword>
<keyword id="KW-0699">rRNA-binding</keyword>
<keyword id="KW-0820">tRNA-binding</keyword>
<gene>
    <name evidence="1" type="primary">rplP</name>
    <name type="ordered locus">FTN_0246</name>
</gene>
<organism>
    <name type="scientific">Francisella tularensis subsp. novicida (strain U112)</name>
    <dbReference type="NCBI Taxonomy" id="401614"/>
    <lineage>
        <taxon>Bacteria</taxon>
        <taxon>Pseudomonadati</taxon>
        <taxon>Pseudomonadota</taxon>
        <taxon>Gammaproteobacteria</taxon>
        <taxon>Thiotrichales</taxon>
        <taxon>Francisellaceae</taxon>
        <taxon>Francisella</taxon>
    </lineage>
</organism>
<feature type="chain" id="PRO_1000054623" description="Large ribosomal subunit protein uL16">
    <location>
        <begin position="1"/>
        <end position="137"/>
    </location>
</feature>
<name>RL16_FRATN</name>
<accession>A0Q4J0</accession>
<comment type="function">
    <text evidence="1">Binds 23S rRNA and is also seen to make contacts with the A and possibly P site tRNAs.</text>
</comment>
<comment type="subunit">
    <text evidence="1">Part of the 50S ribosomal subunit.</text>
</comment>
<comment type="similarity">
    <text evidence="1">Belongs to the universal ribosomal protein uL16 family.</text>
</comment>
<dbReference type="EMBL" id="CP000439">
    <property type="protein sequence ID" value="ABK89155.1"/>
    <property type="molecule type" value="Genomic_DNA"/>
</dbReference>
<dbReference type="RefSeq" id="WP_003027191.1">
    <property type="nucleotide sequence ID" value="NZ_CP009633.1"/>
</dbReference>
<dbReference type="SMR" id="A0Q4J0"/>
<dbReference type="GeneID" id="75264254"/>
<dbReference type="KEGG" id="ftn:FTN_0246"/>
<dbReference type="KEGG" id="ftx:AW25_1796"/>
<dbReference type="BioCyc" id="FTUL401614:G1G75-257-MONOMER"/>
<dbReference type="Proteomes" id="UP000000762">
    <property type="component" value="Chromosome"/>
</dbReference>
<dbReference type="GO" id="GO:0022625">
    <property type="term" value="C:cytosolic large ribosomal subunit"/>
    <property type="evidence" value="ECO:0007669"/>
    <property type="project" value="TreeGrafter"/>
</dbReference>
<dbReference type="GO" id="GO:0019843">
    <property type="term" value="F:rRNA binding"/>
    <property type="evidence" value="ECO:0007669"/>
    <property type="project" value="UniProtKB-UniRule"/>
</dbReference>
<dbReference type="GO" id="GO:0003735">
    <property type="term" value="F:structural constituent of ribosome"/>
    <property type="evidence" value="ECO:0007669"/>
    <property type="project" value="InterPro"/>
</dbReference>
<dbReference type="GO" id="GO:0000049">
    <property type="term" value="F:tRNA binding"/>
    <property type="evidence" value="ECO:0007669"/>
    <property type="project" value="UniProtKB-KW"/>
</dbReference>
<dbReference type="GO" id="GO:0006412">
    <property type="term" value="P:translation"/>
    <property type="evidence" value="ECO:0007669"/>
    <property type="project" value="UniProtKB-UniRule"/>
</dbReference>
<dbReference type="CDD" id="cd01433">
    <property type="entry name" value="Ribosomal_L16_L10e"/>
    <property type="match status" value="1"/>
</dbReference>
<dbReference type="FunFam" id="3.90.1170.10:FF:000001">
    <property type="entry name" value="50S ribosomal protein L16"/>
    <property type="match status" value="1"/>
</dbReference>
<dbReference type="Gene3D" id="3.90.1170.10">
    <property type="entry name" value="Ribosomal protein L10e/L16"/>
    <property type="match status" value="1"/>
</dbReference>
<dbReference type="HAMAP" id="MF_01342">
    <property type="entry name" value="Ribosomal_uL16"/>
    <property type="match status" value="1"/>
</dbReference>
<dbReference type="InterPro" id="IPR047873">
    <property type="entry name" value="Ribosomal_uL16"/>
</dbReference>
<dbReference type="InterPro" id="IPR000114">
    <property type="entry name" value="Ribosomal_uL16_bact-type"/>
</dbReference>
<dbReference type="InterPro" id="IPR020798">
    <property type="entry name" value="Ribosomal_uL16_CS"/>
</dbReference>
<dbReference type="InterPro" id="IPR016180">
    <property type="entry name" value="Ribosomal_uL16_dom"/>
</dbReference>
<dbReference type="InterPro" id="IPR036920">
    <property type="entry name" value="Ribosomal_uL16_sf"/>
</dbReference>
<dbReference type="NCBIfam" id="TIGR01164">
    <property type="entry name" value="rplP_bact"/>
    <property type="match status" value="1"/>
</dbReference>
<dbReference type="PANTHER" id="PTHR12220">
    <property type="entry name" value="50S/60S RIBOSOMAL PROTEIN L16"/>
    <property type="match status" value="1"/>
</dbReference>
<dbReference type="PANTHER" id="PTHR12220:SF13">
    <property type="entry name" value="LARGE RIBOSOMAL SUBUNIT PROTEIN UL16M"/>
    <property type="match status" value="1"/>
</dbReference>
<dbReference type="Pfam" id="PF00252">
    <property type="entry name" value="Ribosomal_L16"/>
    <property type="match status" value="1"/>
</dbReference>
<dbReference type="PRINTS" id="PR00060">
    <property type="entry name" value="RIBOSOMALL16"/>
</dbReference>
<dbReference type="SUPFAM" id="SSF54686">
    <property type="entry name" value="Ribosomal protein L16p/L10e"/>
    <property type="match status" value="1"/>
</dbReference>
<dbReference type="PROSITE" id="PS00586">
    <property type="entry name" value="RIBOSOMAL_L16_1"/>
    <property type="match status" value="1"/>
</dbReference>
<dbReference type="PROSITE" id="PS00701">
    <property type="entry name" value="RIBOSOMAL_L16_2"/>
    <property type="match status" value="1"/>
</dbReference>
<reference key="1">
    <citation type="journal article" date="2007" name="Genome Biol.">
        <title>Comparison of Francisella tularensis genomes reveals evolutionary events associated with the emergence of human pathogenic strains.</title>
        <authorList>
            <person name="Rohmer L."/>
            <person name="Fong C."/>
            <person name="Abmayr S."/>
            <person name="Wasnick M."/>
            <person name="Larson Freeman T.J."/>
            <person name="Radey M."/>
            <person name="Guina T."/>
            <person name="Svensson K."/>
            <person name="Hayden H.S."/>
            <person name="Jacobs M."/>
            <person name="Gallagher L.A."/>
            <person name="Manoil C."/>
            <person name="Ernst R.K."/>
            <person name="Drees B."/>
            <person name="Buckley D."/>
            <person name="Haugen E."/>
            <person name="Bovee D."/>
            <person name="Zhou Y."/>
            <person name="Chang J."/>
            <person name="Levy R."/>
            <person name="Lim R."/>
            <person name="Gillett W."/>
            <person name="Guenthener D."/>
            <person name="Kang A."/>
            <person name="Shaffer S.A."/>
            <person name="Taylor G."/>
            <person name="Chen J."/>
            <person name="Gallis B."/>
            <person name="D'Argenio D.A."/>
            <person name="Forsman M."/>
            <person name="Olson M.V."/>
            <person name="Goodlett D.R."/>
            <person name="Kaul R."/>
            <person name="Miller S.I."/>
            <person name="Brittnacher M.J."/>
        </authorList>
    </citation>
    <scope>NUCLEOTIDE SEQUENCE [LARGE SCALE GENOMIC DNA]</scope>
    <source>
        <strain>U112</strain>
    </source>
</reference>
<protein>
    <recommendedName>
        <fullName evidence="1">Large ribosomal subunit protein uL16</fullName>
    </recommendedName>
    <alternativeName>
        <fullName evidence="2">50S ribosomal protein L16</fullName>
    </alternativeName>
</protein>